<accession>Q8Z4A6</accession>
<gene>
    <name type="primary">sirC</name>
    <name type="synonym">hilC</name>
    <name type="synonym">sprA</name>
    <name type="ordered locus">STY2988</name>
    <name type="ordered locus">t2769</name>
</gene>
<feature type="chain" id="PRO_0000194581" description="Transcriptional regulator SirC">
    <location>
        <begin position="1"/>
        <end position="295"/>
    </location>
</feature>
<feature type="domain" description="HTH araC/xylS-type" evidence="2">
    <location>
        <begin position="195"/>
        <end position="292"/>
    </location>
</feature>
<feature type="DNA-binding region" description="H-T-H motif" evidence="2">
    <location>
        <begin position="212"/>
        <end position="233"/>
    </location>
</feature>
<feature type="DNA-binding region" description="H-T-H motif" evidence="2">
    <location>
        <begin position="259"/>
        <end position="282"/>
    </location>
</feature>
<comment type="function">
    <text evidence="1">Positive regulator of the expression of the invasion-associated type III secretion system encoded within SPI-1 (pathogenicity island 1).</text>
</comment>
<dbReference type="EMBL" id="AL513382">
    <property type="protein sequence ID" value="CAD05974.1"/>
    <property type="molecule type" value="Genomic_DNA"/>
</dbReference>
<dbReference type="EMBL" id="AE014613">
    <property type="protein sequence ID" value="AAO70330.1"/>
    <property type="molecule type" value="Genomic_DNA"/>
</dbReference>
<dbReference type="RefSeq" id="NP_457261.1">
    <property type="nucleotide sequence ID" value="NC_003198.1"/>
</dbReference>
<dbReference type="RefSeq" id="WP_000243995.1">
    <property type="nucleotide sequence ID" value="NZ_WSUR01000005.1"/>
</dbReference>
<dbReference type="SMR" id="Q8Z4A6"/>
<dbReference type="STRING" id="220341.gene:17586884"/>
<dbReference type="KEGG" id="stt:t2769"/>
<dbReference type="KEGG" id="sty:STY2988"/>
<dbReference type="PATRIC" id="fig|220341.7.peg.3043"/>
<dbReference type="eggNOG" id="COG2207">
    <property type="taxonomic scope" value="Bacteria"/>
</dbReference>
<dbReference type="HOGENOM" id="CLU_000445_81_4_6"/>
<dbReference type="OMA" id="YSYYSLM"/>
<dbReference type="OrthoDB" id="6561812at2"/>
<dbReference type="Proteomes" id="UP000000541">
    <property type="component" value="Chromosome"/>
</dbReference>
<dbReference type="Proteomes" id="UP000002670">
    <property type="component" value="Chromosome"/>
</dbReference>
<dbReference type="GO" id="GO:0005829">
    <property type="term" value="C:cytosol"/>
    <property type="evidence" value="ECO:0007669"/>
    <property type="project" value="TreeGrafter"/>
</dbReference>
<dbReference type="GO" id="GO:0003700">
    <property type="term" value="F:DNA-binding transcription factor activity"/>
    <property type="evidence" value="ECO:0007669"/>
    <property type="project" value="InterPro"/>
</dbReference>
<dbReference type="GO" id="GO:0000976">
    <property type="term" value="F:transcription cis-regulatory region binding"/>
    <property type="evidence" value="ECO:0007669"/>
    <property type="project" value="TreeGrafter"/>
</dbReference>
<dbReference type="Gene3D" id="1.10.10.60">
    <property type="entry name" value="Homeodomain-like"/>
    <property type="match status" value="1"/>
</dbReference>
<dbReference type="InterPro" id="IPR009057">
    <property type="entry name" value="Homeodomain-like_sf"/>
</dbReference>
<dbReference type="InterPro" id="IPR018060">
    <property type="entry name" value="HTH_AraC"/>
</dbReference>
<dbReference type="InterPro" id="IPR018062">
    <property type="entry name" value="HTH_AraC-typ_CS"/>
</dbReference>
<dbReference type="InterPro" id="IPR020449">
    <property type="entry name" value="Tscrpt_reg_AraC-type_HTH"/>
</dbReference>
<dbReference type="NCBIfam" id="NF011618">
    <property type="entry name" value="PRK15044.1"/>
    <property type="match status" value="1"/>
</dbReference>
<dbReference type="PANTHER" id="PTHR47894">
    <property type="entry name" value="HTH-TYPE TRANSCRIPTIONAL REGULATOR GADX"/>
    <property type="match status" value="1"/>
</dbReference>
<dbReference type="PANTHER" id="PTHR47894:SF4">
    <property type="entry name" value="HTH-TYPE TRANSCRIPTIONAL REGULATOR GADX"/>
    <property type="match status" value="1"/>
</dbReference>
<dbReference type="Pfam" id="PF12833">
    <property type="entry name" value="HTH_18"/>
    <property type="match status" value="1"/>
</dbReference>
<dbReference type="PRINTS" id="PR00032">
    <property type="entry name" value="HTHARAC"/>
</dbReference>
<dbReference type="SMART" id="SM00342">
    <property type="entry name" value="HTH_ARAC"/>
    <property type="match status" value="1"/>
</dbReference>
<dbReference type="SUPFAM" id="SSF46689">
    <property type="entry name" value="Homeodomain-like"/>
    <property type="match status" value="1"/>
</dbReference>
<dbReference type="PROSITE" id="PS00041">
    <property type="entry name" value="HTH_ARAC_FAMILY_1"/>
    <property type="match status" value="1"/>
</dbReference>
<dbReference type="PROSITE" id="PS01124">
    <property type="entry name" value="HTH_ARAC_FAMILY_2"/>
    <property type="match status" value="1"/>
</dbReference>
<sequence>MVLPSMNKSVEAISNNHLQQPNKFPLINGLADVRDYYVANCLLFKLNKGSLRIENEFGEFIEQSALCLFLLEKDQTITLSMSEIEGHIDFSSLEVSYDLMQKFYKVFYSTRNYNDRELSLKTKPKYFFHADLLPGMSDTFDSILHGVACPRVCSNVSIDDHDYSYFSLMYLISAFVRKPGGFDFLERAIKITTKEKVYNIIISDLTRKWSQAEVAGKLFMSVSSLKRKLAAEEVSFSKIYLDARMNQAIKLLRMGAGNISQVATMCGYDTPSYFIAIFKRHFKITPLSFMRTMNH</sequence>
<keyword id="KW-0010">Activator</keyword>
<keyword id="KW-0238">DNA-binding</keyword>
<keyword id="KW-0804">Transcription</keyword>
<keyword id="KW-0805">Transcription regulation</keyword>
<evidence type="ECO:0000250" key="1"/>
<evidence type="ECO:0000255" key="2">
    <source>
        <dbReference type="PROSITE-ProRule" id="PRU00593"/>
    </source>
</evidence>
<reference key="1">
    <citation type="journal article" date="2001" name="Nature">
        <title>Complete genome sequence of a multiple drug resistant Salmonella enterica serovar Typhi CT18.</title>
        <authorList>
            <person name="Parkhill J."/>
            <person name="Dougan G."/>
            <person name="James K.D."/>
            <person name="Thomson N.R."/>
            <person name="Pickard D."/>
            <person name="Wain J."/>
            <person name="Churcher C.M."/>
            <person name="Mungall K.L."/>
            <person name="Bentley S.D."/>
            <person name="Holden M.T.G."/>
            <person name="Sebaihia M."/>
            <person name="Baker S."/>
            <person name="Basham D."/>
            <person name="Brooks K."/>
            <person name="Chillingworth T."/>
            <person name="Connerton P."/>
            <person name="Cronin A."/>
            <person name="Davis P."/>
            <person name="Davies R.M."/>
            <person name="Dowd L."/>
            <person name="White N."/>
            <person name="Farrar J."/>
            <person name="Feltwell T."/>
            <person name="Hamlin N."/>
            <person name="Haque A."/>
            <person name="Hien T.T."/>
            <person name="Holroyd S."/>
            <person name="Jagels K."/>
            <person name="Krogh A."/>
            <person name="Larsen T.S."/>
            <person name="Leather S."/>
            <person name="Moule S."/>
            <person name="O'Gaora P."/>
            <person name="Parry C."/>
            <person name="Quail M.A."/>
            <person name="Rutherford K.M."/>
            <person name="Simmonds M."/>
            <person name="Skelton J."/>
            <person name="Stevens K."/>
            <person name="Whitehead S."/>
            <person name="Barrell B.G."/>
        </authorList>
    </citation>
    <scope>NUCLEOTIDE SEQUENCE [LARGE SCALE GENOMIC DNA]</scope>
    <source>
        <strain>CT18</strain>
    </source>
</reference>
<reference key="2">
    <citation type="journal article" date="2003" name="J. Bacteriol.">
        <title>Comparative genomics of Salmonella enterica serovar Typhi strains Ty2 and CT18.</title>
        <authorList>
            <person name="Deng W."/>
            <person name="Liou S.-R."/>
            <person name="Plunkett G. III"/>
            <person name="Mayhew G.F."/>
            <person name="Rose D.J."/>
            <person name="Burland V."/>
            <person name="Kodoyianni V."/>
            <person name="Schwartz D.C."/>
            <person name="Blattner F.R."/>
        </authorList>
    </citation>
    <scope>NUCLEOTIDE SEQUENCE [LARGE SCALE GENOMIC DNA]</scope>
    <source>
        <strain>ATCC 700931 / Ty2</strain>
    </source>
</reference>
<protein>
    <recommendedName>
        <fullName>Transcriptional regulator SirC</fullName>
    </recommendedName>
</protein>
<organism>
    <name type="scientific">Salmonella typhi</name>
    <dbReference type="NCBI Taxonomy" id="90370"/>
    <lineage>
        <taxon>Bacteria</taxon>
        <taxon>Pseudomonadati</taxon>
        <taxon>Pseudomonadota</taxon>
        <taxon>Gammaproteobacteria</taxon>
        <taxon>Enterobacterales</taxon>
        <taxon>Enterobacteriaceae</taxon>
        <taxon>Salmonella</taxon>
    </lineage>
</organism>
<name>SIRC_SALTI</name>
<proteinExistence type="inferred from homology"/>